<feature type="chain" id="PRO_0000309880" description="Large ribosomal subunit protein uL2">
    <location>
        <begin position="1"/>
        <end position="275"/>
    </location>
</feature>
<feature type="region of interest" description="Disordered" evidence="2">
    <location>
        <begin position="35"/>
        <end position="59"/>
    </location>
</feature>
<feature type="region of interest" description="Disordered" evidence="2">
    <location>
        <begin position="224"/>
        <end position="275"/>
    </location>
</feature>
<feature type="compositionally biased region" description="Polar residues" evidence="2">
    <location>
        <begin position="35"/>
        <end position="49"/>
    </location>
</feature>
<feature type="compositionally biased region" description="Basic residues" evidence="2">
    <location>
        <begin position="50"/>
        <end position="59"/>
    </location>
</feature>
<comment type="function">
    <text evidence="1">One of the primary rRNA binding proteins. Required for association of the 30S and 50S subunits to form the 70S ribosome, for tRNA binding and peptide bond formation. It has been suggested to have peptidyltransferase activity; this is somewhat controversial. Makes several contacts with the 16S rRNA in the 70S ribosome.</text>
</comment>
<comment type="subunit">
    <text evidence="1">Part of the 50S ribosomal subunit. Forms a bridge to the 30S subunit in the 70S ribosome.</text>
</comment>
<comment type="similarity">
    <text evidence="1">Belongs to the universal ribosomal protein uL2 family.</text>
</comment>
<gene>
    <name evidence="1" type="primary">rplB</name>
    <name type="ordered locus">Bcen_2756</name>
</gene>
<protein>
    <recommendedName>
        <fullName evidence="1">Large ribosomal subunit protein uL2</fullName>
    </recommendedName>
    <alternativeName>
        <fullName evidence="3">50S ribosomal protein L2</fullName>
    </alternativeName>
</protein>
<accession>Q1BRV1</accession>
<evidence type="ECO:0000255" key="1">
    <source>
        <dbReference type="HAMAP-Rule" id="MF_01320"/>
    </source>
</evidence>
<evidence type="ECO:0000256" key="2">
    <source>
        <dbReference type="SAM" id="MobiDB-lite"/>
    </source>
</evidence>
<evidence type="ECO:0000305" key="3"/>
<sequence length="275" mass="30101">MAIVKVKPTSPGRRAMVKVVNKNLHQGKPFAALLDSQSSTAGRNNNGRITTRHKGGGHKQHYRIVDFRRTKDGIPAKVERLEYDPNRSANIALVLYADGERRYIIAPKGLTVGQQLMSGSEAPIRAGNTLPIRNIPVGTTIHCIEMLPGKGAQMARSAGTSAMLLAREGVYAQVRLRSGEIRRVHIECRATIGEVGNEEHSLRQIGKAGANRWRGIRPTVRGVAMNPVDHPHGGGEGKTAAGRDPVSPWGTPAKGYRTRSNKRTTTMIVQRRHKR</sequence>
<reference key="1">
    <citation type="submission" date="2006-05" db="EMBL/GenBank/DDBJ databases">
        <title>Complete sequence of chromosome 1 of Burkholderia cenocepacia AU 1054.</title>
        <authorList>
            <consortium name="US DOE Joint Genome Institute"/>
            <person name="Copeland A."/>
            <person name="Lucas S."/>
            <person name="Lapidus A."/>
            <person name="Barry K."/>
            <person name="Detter J.C."/>
            <person name="Glavina del Rio T."/>
            <person name="Hammon N."/>
            <person name="Israni S."/>
            <person name="Dalin E."/>
            <person name="Tice H."/>
            <person name="Pitluck S."/>
            <person name="Chain P."/>
            <person name="Malfatti S."/>
            <person name="Shin M."/>
            <person name="Vergez L."/>
            <person name="Schmutz J."/>
            <person name="Larimer F."/>
            <person name="Land M."/>
            <person name="Hauser L."/>
            <person name="Kyrpides N."/>
            <person name="Lykidis A."/>
            <person name="LiPuma J.J."/>
            <person name="Konstantinidis K."/>
            <person name="Tiedje J.M."/>
            <person name="Richardson P."/>
        </authorList>
    </citation>
    <scope>NUCLEOTIDE SEQUENCE [LARGE SCALE GENOMIC DNA]</scope>
    <source>
        <strain>AU 1054</strain>
    </source>
</reference>
<keyword id="KW-0687">Ribonucleoprotein</keyword>
<keyword id="KW-0689">Ribosomal protein</keyword>
<keyword id="KW-0694">RNA-binding</keyword>
<keyword id="KW-0699">rRNA-binding</keyword>
<name>RL2_BURO1</name>
<organism>
    <name type="scientific">Burkholderia orbicola (strain AU 1054)</name>
    <dbReference type="NCBI Taxonomy" id="331271"/>
    <lineage>
        <taxon>Bacteria</taxon>
        <taxon>Pseudomonadati</taxon>
        <taxon>Pseudomonadota</taxon>
        <taxon>Betaproteobacteria</taxon>
        <taxon>Burkholderiales</taxon>
        <taxon>Burkholderiaceae</taxon>
        <taxon>Burkholderia</taxon>
        <taxon>Burkholderia cepacia complex</taxon>
        <taxon>Burkholderia orbicola</taxon>
    </lineage>
</organism>
<proteinExistence type="inferred from homology"/>
<dbReference type="EMBL" id="CP000378">
    <property type="protein sequence ID" value="ABF77654.1"/>
    <property type="molecule type" value="Genomic_DNA"/>
</dbReference>
<dbReference type="SMR" id="Q1BRV1"/>
<dbReference type="HOGENOM" id="CLU_036235_2_1_4"/>
<dbReference type="GO" id="GO:0015934">
    <property type="term" value="C:large ribosomal subunit"/>
    <property type="evidence" value="ECO:0007669"/>
    <property type="project" value="InterPro"/>
</dbReference>
<dbReference type="GO" id="GO:0019843">
    <property type="term" value="F:rRNA binding"/>
    <property type="evidence" value="ECO:0007669"/>
    <property type="project" value="UniProtKB-UniRule"/>
</dbReference>
<dbReference type="GO" id="GO:0003735">
    <property type="term" value="F:structural constituent of ribosome"/>
    <property type="evidence" value="ECO:0007669"/>
    <property type="project" value="InterPro"/>
</dbReference>
<dbReference type="GO" id="GO:0016740">
    <property type="term" value="F:transferase activity"/>
    <property type="evidence" value="ECO:0007669"/>
    <property type="project" value="InterPro"/>
</dbReference>
<dbReference type="GO" id="GO:0002181">
    <property type="term" value="P:cytoplasmic translation"/>
    <property type="evidence" value="ECO:0007669"/>
    <property type="project" value="TreeGrafter"/>
</dbReference>
<dbReference type="FunFam" id="2.30.30.30:FF:000001">
    <property type="entry name" value="50S ribosomal protein L2"/>
    <property type="match status" value="1"/>
</dbReference>
<dbReference type="FunFam" id="2.40.50.140:FF:000003">
    <property type="entry name" value="50S ribosomal protein L2"/>
    <property type="match status" value="1"/>
</dbReference>
<dbReference type="FunFam" id="4.10.950.10:FF:000001">
    <property type="entry name" value="50S ribosomal protein L2"/>
    <property type="match status" value="1"/>
</dbReference>
<dbReference type="Gene3D" id="2.30.30.30">
    <property type="match status" value="1"/>
</dbReference>
<dbReference type="Gene3D" id="2.40.50.140">
    <property type="entry name" value="Nucleic acid-binding proteins"/>
    <property type="match status" value="1"/>
</dbReference>
<dbReference type="Gene3D" id="4.10.950.10">
    <property type="entry name" value="Ribosomal protein L2, domain 3"/>
    <property type="match status" value="1"/>
</dbReference>
<dbReference type="HAMAP" id="MF_01320_B">
    <property type="entry name" value="Ribosomal_uL2_B"/>
    <property type="match status" value="1"/>
</dbReference>
<dbReference type="InterPro" id="IPR012340">
    <property type="entry name" value="NA-bd_OB-fold"/>
</dbReference>
<dbReference type="InterPro" id="IPR014722">
    <property type="entry name" value="Rib_uL2_dom2"/>
</dbReference>
<dbReference type="InterPro" id="IPR002171">
    <property type="entry name" value="Ribosomal_uL2"/>
</dbReference>
<dbReference type="InterPro" id="IPR005880">
    <property type="entry name" value="Ribosomal_uL2_bac/org-type"/>
</dbReference>
<dbReference type="InterPro" id="IPR022669">
    <property type="entry name" value="Ribosomal_uL2_C"/>
</dbReference>
<dbReference type="InterPro" id="IPR022671">
    <property type="entry name" value="Ribosomal_uL2_CS"/>
</dbReference>
<dbReference type="InterPro" id="IPR014726">
    <property type="entry name" value="Ribosomal_uL2_dom3"/>
</dbReference>
<dbReference type="InterPro" id="IPR022666">
    <property type="entry name" value="Ribosomal_uL2_RNA-bd_dom"/>
</dbReference>
<dbReference type="InterPro" id="IPR008991">
    <property type="entry name" value="Translation_prot_SH3-like_sf"/>
</dbReference>
<dbReference type="NCBIfam" id="TIGR01171">
    <property type="entry name" value="rplB_bact"/>
    <property type="match status" value="1"/>
</dbReference>
<dbReference type="PANTHER" id="PTHR13691:SF5">
    <property type="entry name" value="LARGE RIBOSOMAL SUBUNIT PROTEIN UL2M"/>
    <property type="match status" value="1"/>
</dbReference>
<dbReference type="PANTHER" id="PTHR13691">
    <property type="entry name" value="RIBOSOMAL PROTEIN L2"/>
    <property type="match status" value="1"/>
</dbReference>
<dbReference type="Pfam" id="PF00181">
    <property type="entry name" value="Ribosomal_L2"/>
    <property type="match status" value="1"/>
</dbReference>
<dbReference type="Pfam" id="PF03947">
    <property type="entry name" value="Ribosomal_L2_C"/>
    <property type="match status" value="1"/>
</dbReference>
<dbReference type="PIRSF" id="PIRSF002158">
    <property type="entry name" value="Ribosomal_L2"/>
    <property type="match status" value="1"/>
</dbReference>
<dbReference type="SMART" id="SM01383">
    <property type="entry name" value="Ribosomal_L2"/>
    <property type="match status" value="1"/>
</dbReference>
<dbReference type="SMART" id="SM01382">
    <property type="entry name" value="Ribosomal_L2_C"/>
    <property type="match status" value="1"/>
</dbReference>
<dbReference type="SUPFAM" id="SSF50249">
    <property type="entry name" value="Nucleic acid-binding proteins"/>
    <property type="match status" value="1"/>
</dbReference>
<dbReference type="SUPFAM" id="SSF50104">
    <property type="entry name" value="Translation proteins SH3-like domain"/>
    <property type="match status" value="1"/>
</dbReference>
<dbReference type="PROSITE" id="PS00467">
    <property type="entry name" value="RIBOSOMAL_L2"/>
    <property type="match status" value="1"/>
</dbReference>